<comment type="function">
    <text evidence="1">Catalyzes the phosphorylation of pantothenate (Pan), the first step in CoA biosynthesis.</text>
</comment>
<comment type="catalytic activity">
    <reaction evidence="1">
        <text>(R)-pantothenate + ATP = (R)-4'-phosphopantothenate + ADP + H(+)</text>
        <dbReference type="Rhea" id="RHEA:16373"/>
        <dbReference type="ChEBI" id="CHEBI:10986"/>
        <dbReference type="ChEBI" id="CHEBI:15378"/>
        <dbReference type="ChEBI" id="CHEBI:29032"/>
        <dbReference type="ChEBI" id="CHEBI:30616"/>
        <dbReference type="ChEBI" id="CHEBI:456216"/>
        <dbReference type="EC" id="2.7.1.33"/>
    </reaction>
</comment>
<comment type="cofactor">
    <cofactor evidence="1">
        <name>NH4(+)</name>
        <dbReference type="ChEBI" id="CHEBI:28938"/>
    </cofactor>
    <cofactor evidence="1">
        <name>K(+)</name>
        <dbReference type="ChEBI" id="CHEBI:29103"/>
    </cofactor>
    <text evidence="1">A monovalent cation. Ammonium or potassium.</text>
</comment>
<comment type="pathway">
    <text evidence="1">Cofactor biosynthesis; coenzyme A biosynthesis; CoA from (R)-pantothenate: step 1/5.</text>
</comment>
<comment type="subunit">
    <text evidence="1">Homodimer.</text>
</comment>
<comment type="subcellular location">
    <subcellularLocation>
        <location evidence="1">Cytoplasm</location>
    </subcellularLocation>
</comment>
<comment type="similarity">
    <text evidence="1">Belongs to the type III pantothenate kinase family.</text>
</comment>
<reference key="1">
    <citation type="journal article" date="2010" name="Genome Biol. Evol.">
        <title>Continuing evolution of Burkholderia mallei through genome reduction and large-scale rearrangements.</title>
        <authorList>
            <person name="Losada L."/>
            <person name="Ronning C.M."/>
            <person name="DeShazer D."/>
            <person name="Woods D."/>
            <person name="Fedorova N."/>
            <person name="Kim H.S."/>
            <person name="Shabalina S.A."/>
            <person name="Pearson T.R."/>
            <person name="Brinkac L."/>
            <person name="Tan P."/>
            <person name="Nandi T."/>
            <person name="Crabtree J."/>
            <person name="Badger J."/>
            <person name="Beckstrom-Sternberg S."/>
            <person name="Saqib M."/>
            <person name="Schutzer S.E."/>
            <person name="Keim P."/>
            <person name="Nierman W.C."/>
        </authorList>
    </citation>
    <scope>NUCLEOTIDE SEQUENCE [LARGE SCALE GENOMIC DNA]</scope>
    <source>
        <strain>NCTC 10247</strain>
    </source>
</reference>
<organism>
    <name type="scientific">Burkholderia mallei (strain NCTC 10247)</name>
    <dbReference type="NCBI Taxonomy" id="320389"/>
    <lineage>
        <taxon>Bacteria</taxon>
        <taxon>Pseudomonadati</taxon>
        <taxon>Pseudomonadota</taxon>
        <taxon>Betaproteobacteria</taxon>
        <taxon>Burkholderiales</taxon>
        <taxon>Burkholderiaceae</taxon>
        <taxon>Burkholderia</taxon>
        <taxon>pseudomallei group</taxon>
    </lineage>
</organism>
<feature type="chain" id="PRO_1000067387" description="Type III pantothenate kinase">
    <location>
        <begin position="1"/>
        <end position="256"/>
    </location>
</feature>
<feature type="active site" description="Proton acceptor" evidence="1">
    <location>
        <position position="99"/>
    </location>
</feature>
<feature type="binding site" evidence="1">
    <location>
        <begin position="6"/>
        <end position="13"/>
    </location>
    <ligand>
        <name>ATP</name>
        <dbReference type="ChEBI" id="CHEBI:30616"/>
    </ligand>
</feature>
<feature type="binding site" evidence="1">
    <location>
        <position position="90"/>
    </location>
    <ligand>
        <name>substrate</name>
    </ligand>
</feature>
<feature type="binding site" evidence="1">
    <location>
        <begin position="97"/>
        <end position="100"/>
    </location>
    <ligand>
        <name>substrate</name>
    </ligand>
</feature>
<feature type="binding site" evidence="1">
    <location>
        <position position="123"/>
    </location>
    <ligand>
        <name>ATP</name>
        <dbReference type="ChEBI" id="CHEBI:30616"/>
    </ligand>
</feature>
<feature type="binding site" evidence="1">
    <location>
        <position position="187"/>
    </location>
    <ligand>
        <name>substrate</name>
    </ligand>
</feature>
<keyword id="KW-0067">ATP-binding</keyword>
<keyword id="KW-0173">Coenzyme A biosynthesis</keyword>
<keyword id="KW-0963">Cytoplasm</keyword>
<keyword id="KW-0418">Kinase</keyword>
<keyword id="KW-0547">Nucleotide-binding</keyword>
<keyword id="KW-0630">Potassium</keyword>
<keyword id="KW-0808">Transferase</keyword>
<dbReference type="EC" id="2.7.1.33" evidence="1"/>
<dbReference type="EMBL" id="CP000548">
    <property type="protein sequence ID" value="ABO03970.1"/>
    <property type="molecule type" value="Genomic_DNA"/>
</dbReference>
<dbReference type="SMR" id="A3MR36"/>
<dbReference type="KEGG" id="bmn:BMA10247_3205"/>
<dbReference type="UniPathway" id="UPA00241">
    <property type="reaction ID" value="UER00352"/>
</dbReference>
<dbReference type="GO" id="GO:0005737">
    <property type="term" value="C:cytoplasm"/>
    <property type="evidence" value="ECO:0007669"/>
    <property type="project" value="UniProtKB-SubCell"/>
</dbReference>
<dbReference type="GO" id="GO:0005524">
    <property type="term" value="F:ATP binding"/>
    <property type="evidence" value="ECO:0007669"/>
    <property type="project" value="UniProtKB-UniRule"/>
</dbReference>
<dbReference type="GO" id="GO:0004594">
    <property type="term" value="F:pantothenate kinase activity"/>
    <property type="evidence" value="ECO:0007669"/>
    <property type="project" value="UniProtKB-UniRule"/>
</dbReference>
<dbReference type="GO" id="GO:0015937">
    <property type="term" value="P:coenzyme A biosynthetic process"/>
    <property type="evidence" value="ECO:0007669"/>
    <property type="project" value="UniProtKB-UniRule"/>
</dbReference>
<dbReference type="CDD" id="cd24015">
    <property type="entry name" value="ASKHA_NBD_PanK-III"/>
    <property type="match status" value="1"/>
</dbReference>
<dbReference type="Gene3D" id="3.30.420.40">
    <property type="match status" value="2"/>
</dbReference>
<dbReference type="HAMAP" id="MF_01274">
    <property type="entry name" value="Pantothen_kinase_3"/>
    <property type="match status" value="1"/>
</dbReference>
<dbReference type="InterPro" id="IPR043129">
    <property type="entry name" value="ATPase_NBD"/>
</dbReference>
<dbReference type="InterPro" id="IPR004619">
    <property type="entry name" value="Type_III_PanK"/>
</dbReference>
<dbReference type="NCBIfam" id="TIGR00671">
    <property type="entry name" value="baf"/>
    <property type="match status" value="1"/>
</dbReference>
<dbReference type="NCBIfam" id="NF009865">
    <property type="entry name" value="PRK13328.1-1"/>
    <property type="match status" value="1"/>
</dbReference>
<dbReference type="NCBIfam" id="NF009868">
    <property type="entry name" value="PRK13328.1-4"/>
    <property type="match status" value="1"/>
</dbReference>
<dbReference type="PANTHER" id="PTHR34265">
    <property type="entry name" value="TYPE III PANTOTHENATE KINASE"/>
    <property type="match status" value="1"/>
</dbReference>
<dbReference type="PANTHER" id="PTHR34265:SF1">
    <property type="entry name" value="TYPE III PANTOTHENATE KINASE"/>
    <property type="match status" value="1"/>
</dbReference>
<dbReference type="Pfam" id="PF03309">
    <property type="entry name" value="Pan_kinase"/>
    <property type="match status" value="1"/>
</dbReference>
<dbReference type="SUPFAM" id="SSF53067">
    <property type="entry name" value="Actin-like ATPase domain"/>
    <property type="match status" value="2"/>
</dbReference>
<proteinExistence type="inferred from homology"/>
<accession>A3MR36</accession>
<evidence type="ECO:0000255" key="1">
    <source>
        <dbReference type="HAMAP-Rule" id="MF_01274"/>
    </source>
</evidence>
<name>COAX_BURM7</name>
<gene>
    <name evidence="1" type="primary">coaX</name>
    <name type="ordered locus">BMA10247_3205</name>
</gene>
<protein>
    <recommendedName>
        <fullName evidence="1">Type III pantothenate kinase</fullName>
        <ecNumber evidence="1">2.7.1.33</ecNumber>
    </recommendedName>
    <alternativeName>
        <fullName evidence="1">PanK-III</fullName>
    </alternativeName>
    <alternativeName>
        <fullName evidence="1">Pantothenic acid kinase</fullName>
    </alternativeName>
</protein>
<sequence>MCLLIDAGNSRIKWALADTARHFVTSGAFEHASDAPDWSTLPAPRGAWISNVAGDAAAARIDALIEARWPALPRTVVRASAAQCGVTNGYAEPARLGSDRWAGLIGAHAAFADEHLLIATFGTATTLEALRADGHFAGGLIAPGWALMMRSLGMHTAQLPTVSIDAATNLLDELAENDAHAPFAIDTPHALSAGCLQAQAGLIERAWRDLEKAWQAPVRLVLSGGAADAIVRALTVPHTRHDTLVLTGLALIAHSA</sequence>